<evidence type="ECO:0000255" key="1"/>
<evidence type="ECO:0000255" key="2">
    <source>
        <dbReference type="HAMAP-Rule" id="MF_04131"/>
    </source>
</evidence>
<evidence type="ECO:0000305" key="3"/>
<organismHost>
    <name type="scientific">Equus caballus</name>
    <name type="common">Horse</name>
    <dbReference type="NCBI Taxonomy" id="9796"/>
</organismHost>
<keyword id="KW-0024">Alternative initiation</keyword>
<keyword id="KW-0106">Calcium</keyword>
<keyword id="KW-0167">Capsid protein</keyword>
<keyword id="KW-1015">Disulfide bond</keyword>
<keyword id="KW-0325">Glycoprotein</keyword>
<keyword id="KW-1038">Host endoplasmic reticulum</keyword>
<keyword id="KW-0945">Host-virus interaction</keyword>
<keyword id="KW-0479">Metal-binding</keyword>
<keyword id="KW-1152">Outer capsid protein</keyword>
<keyword id="KW-0732">Signal</keyword>
<keyword id="KW-1146">T=13 icosahedral capsid protein</keyword>
<keyword id="KW-0946">Virion</keyword>
<feature type="signal peptide" evidence="2">
    <location>
        <begin position="1"/>
        <end position="50"/>
    </location>
</feature>
<feature type="chain" id="PRO_0000149591" description="Outer capsid glycoprotein VP7" evidence="2">
    <location>
        <begin position="51"/>
        <end position="326"/>
    </location>
</feature>
<feature type="region of interest" description="CNP motif; interaction with ITGAV/ITGB3" evidence="2">
    <location>
        <begin position="165"/>
        <end position="167"/>
    </location>
</feature>
<feature type="region of interest" description="GPR motif; interaction with ITGAX/ITGB2" evidence="2">
    <location>
        <begin position="253"/>
        <end position="255"/>
    </location>
</feature>
<feature type="binding site" evidence="2">
    <location>
        <position position="95"/>
    </location>
    <ligand>
        <name>Ca(2+)</name>
        <dbReference type="ChEBI" id="CHEBI:29108"/>
        <label>1</label>
    </ligand>
</feature>
<feature type="binding site" evidence="2">
    <location>
        <position position="177"/>
    </location>
    <ligand>
        <name>Ca(2+)</name>
        <dbReference type="ChEBI" id="CHEBI:29108"/>
        <label>2</label>
    </ligand>
</feature>
<feature type="binding site" evidence="2">
    <location>
        <position position="206"/>
    </location>
    <ligand>
        <name>Ca(2+)</name>
        <dbReference type="ChEBI" id="CHEBI:29108"/>
        <label>1</label>
    </ligand>
</feature>
<feature type="binding site" evidence="2">
    <location>
        <position position="214"/>
    </location>
    <ligand>
        <name>Ca(2+)</name>
        <dbReference type="ChEBI" id="CHEBI:29108"/>
        <label>1</label>
    </ligand>
</feature>
<feature type="binding site" evidence="2">
    <location>
        <position position="216"/>
    </location>
    <ligand>
        <name>Ca(2+)</name>
        <dbReference type="ChEBI" id="CHEBI:29108"/>
        <label>1</label>
    </ligand>
</feature>
<feature type="binding site" evidence="2">
    <location>
        <position position="228"/>
    </location>
    <ligand>
        <name>Ca(2+)</name>
        <dbReference type="ChEBI" id="CHEBI:29108"/>
        <label>2</label>
    </ligand>
</feature>
<feature type="binding site" evidence="2">
    <location>
        <position position="229"/>
    </location>
    <ligand>
        <name>Ca(2+)</name>
        <dbReference type="ChEBI" id="CHEBI:29108"/>
        <label>2</label>
    </ligand>
</feature>
<feature type="binding site" evidence="2">
    <location>
        <position position="231"/>
    </location>
    <ligand>
        <name>Ca(2+)</name>
        <dbReference type="ChEBI" id="CHEBI:29108"/>
        <label>2</label>
    </ligand>
</feature>
<feature type="binding site" evidence="2">
    <location>
        <position position="301"/>
    </location>
    <ligand>
        <name>Ca(2+)</name>
        <dbReference type="ChEBI" id="CHEBI:29108"/>
        <label>2</label>
    </ligand>
</feature>
<feature type="glycosylation site" description="N-linked (GlcNAc...) asparagine; by host" evidence="1">
    <location>
        <position position="69"/>
    </location>
</feature>
<feature type="glycosylation site" description="N-linked (GlcNAc...) asparagine; by host" evidence="1">
    <location>
        <position position="238"/>
    </location>
</feature>
<feature type="disulfide bond" evidence="2">
    <location>
        <begin position="82"/>
        <end position="135"/>
    </location>
</feature>
<feature type="disulfide bond" evidence="2">
    <location>
        <begin position="165"/>
        <end position="249"/>
    </location>
</feature>
<feature type="disulfide bond" evidence="2">
    <location>
        <begin position="191"/>
        <end position="244"/>
    </location>
</feature>
<feature type="disulfide bond" evidence="2">
    <location>
        <begin position="196"/>
        <end position="207"/>
    </location>
</feature>
<feature type="splice variant" id="VSP_038590" description="In isoform 2." evidence="3">
    <location>
        <begin position="1"/>
        <end position="29"/>
    </location>
</feature>
<comment type="function">
    <text evidence="2">Calcium-binding protein that interacts with rotavirus cell receptors once the initial attachment by VP4 has been achieved. Rotavirus attachment and entry into the host cell probably involves multiple sequential contacts between the outer capsid proteins VP4 and VP7, and the cell receptors. Following entry into the host cell, low intracellular or intravesicular Ca(2+) concentration probably causes the calcium-stabilized VP7 trimers to dissociate from the virion. This step is probably necessary for the membrane-disrupting entry step and the release of VP4, which is locked onto the virion by VP7.</text>
</comment>
<comment type="subunit">
    <text evidence="2">Homotrimer; disulfide-linked. 2 Ca(2+) ions bound at each subunit interface in the trimer hold the trimer together. Interacts with the intermediate capsid protein VP6. Interacts with the outer capsid protein VP5*.</text>
</comment>
<comment type="subcellular location">
    <subcellularLocation>
        <location evidence="2">Virion</location>
    </subcellularLocation>
    <subcellularLocation>
        <location evidence="2">Host endoplasmic reticulum lumen</location>
    </subcellularLocation>
    <text evidence="2">The outer layer contains 780 copies of VP7, grouped as 260 trimers. Immature double-layered particles assembled in the cytoplasm bud across the membrane of the endoplasmic reticulum, acquiring during this process a transient lipid membrane that is modified with the ER resident viral glycoproteins NSP4 and VP7; these enveloped particles also contain VP4. As the particles move towards the interior of the ER cisternae, the transient lipid membrane and the non-structural protein NSP4 are lost, while the virus surface proteins VP4 and VP7 rearrange to form the outermost virus protein layer, yielding mature infectious triple-layered particles.</text>
</comment>
<comment type="alternative products">
    <event type="alternative initiation"/>
    <isoform>
        <id>P25176-1</id>
        <name>1</name>
        <sequence type="displayed"/>
    </isoform>
    <isoform>
        <id>P25176-2</id>
        <name>2</name>
        <sequence type="described" ref="VSP_038590"/>
    </isoform>
</comment>
<comment type="PTM">
    <text evidence="2">N-glycosylated.</text>
</comment>
<comment type="PTM">
    <text evidence="2">The N-terminus is blocked possibly by pyroglutamic acid.</text>
</comment>
<comment type="miscellaneous">
    <text evidence="2">Some rotavirus strains are neuraminidase-sensitive and require sialic acid to attach to the cell surface. Some rotavirus strains are integrin-dependent. Some rotavirus strains depend on ganglioside for their entry into the host cell. Hsp70 also seems to be involved in the entry of some strains.</text>
</comment>
<comment type="miscellaneous">
    <text evidence="2">In group A rotaviruses, VP7 defines the G serotype.</text>
</comment>
<comment type="miscellaneous">
    <molecule>Isoform 2</molecule>
    <text evidence="3">Produced by alternative initiation at Met-30 of isoform 1.</text>
</comment>
<comment type="similarity">
    <text evidence="2">Belongs to the rotavirus VP7 family.</text>
</comment>
<reference key="1">
    <citation type="journal article" date="1991" name="J. Gen. Virol.">
        <title>Serological and genomic characterization of L338, a novel equine group A rotavirus G serotype.</title>
        <authorList>
            <person name="Browning G.F."/>
            <person name="Chalmers R.M."/>
            <person name="Fitzgerald T.A."/>
            <person name="Snodgrass D.R."/>
        </authorList>
    </citation>
    <scope>NUCLEOTIDE SEQUENCE [GENOMIC RNA]</scope>
</reference>
<proteinExistence type="inferred from homology"/>
<protein>
    <recommendedName>
        <fullName evidence="2">Outer capsid glycoprotein VP7</fullName>
    </recommendedName>
</protein>
<organism>
    <name type="scientific">Rotavirus A (isolate RVA/Equine/United Kingdom/L338/1988/G13P12[18])</name>
    <name type="common">RV-A</name>
    <dbReference type="NCBI Taxonomy" id="36441"/>
    <lineage>
        <taxon>Viruses</taxon>
        <taxon>Riboviria</taxon>
        <taxon>Orthornavirae</taxon>
        <taxon>Duplornaviricota</taxon>
        <taxon>Resentoviricetes</taxon>
        <taxon>Reovirales</taxon>
        <taxon>Sedoreoviridae</taxon>
        <taxon>Rotavirus</taxon>
        <taxon>Rotavirus A</taxon>
    </lineage>
</organism>
<dbReference type="EMBL" id="D13549">
    <property type="protein sequence ID" value="BAA02748.1"/>
    <property type="molecule type" value="Genomic_RNA"/>
</dbReference>
<dbReference type="SMR" id="P25176"/>
<dbReference type="GO" id="GO:0044166">
    <property type="term" value="C:host cell endoplasmic reticulum lumen"/>
    <property type="evidence" value="ECO:0007669"/>
    <property type="project" value="UniProtKB-SubCell"/>
</dbReference>
<dbReference type="GO" id="GO:0039621">
    <property type="term" value="C:T=13 icosahedral viral capsid"/>
    <property type="evidence" value="ECO:0007669"/>
    <property type="project" value="UniProtKB-UniRule"/>
</dbReference>
<dbReference type="GO" id="GO:0039624">
    <property type="term" value="C:viral outer capsid"/>
    <property type="evidence" value="ECO:0007669"/>
    <property type="project" value="UniProtKB-UniRule"/>
</dbReference>
<dbReference type="GO" id="GO:0046872">
    <property type="term" value="F:metal ion binding"/>
    <property type="evidence" value="ECO:0007669"/>
    <property type="project" value="UniProtKB-KW"/>
</dbReference>
<dbReference type="Gene3D" id="3.40.50.11130">
    <property type="entry name" value="Glycoprotein VP7, domain 1"/>
    <property type="match status" value="1"/>
</dbReference>
<dbReference type="Gene3D" id="2.60.120.800">
    <property type="entry name" value="Rotavirus outer-layer protein VP7, domain 2"/>
    <property type="match status" value="1"/>
</dbReference>
<dbReference type="HAMAP" id="MF_04130">
    <property type="entry name" value="Rota_VP7"/>
    <property type="match status" value="1"/>
</dbReference>
<dbReference type="HAMAP" id="MF_04131">
    <property type="entry name" value="Rota_VP7_A"/>
    <property type="match status" value="1"/>
</dbReference>
<dbReference type="InterPro" id="IPR001963">
    <property type="entry name" value="VP7"/>
</dbReference>
<dbReference type="InterPro" id="IPR042207">
    <property type="entry name" value="VP7_1"/>
</dbReference>
<dbReference type="InterPro" id="IPR042210">
    <property type="entry name" value="VP7_2"/>
</dbReference>
<dbReference type="Pfam" id="PF00434">
    <property type="entry name" value="VP7"/>
    <property type="match status" value="1"/>
</dbReference>
<accession>P25176</accession>
<name>VP7_ROTEL</name>
<sequence>MYGIEYTTILTFFVSFIILDYTIKTLTRAMDFIIYRFLLVVVILSPLLTAQNYGINLPITGSMDTAYANSTQEENFLVSTLCLYYPNEVVSELNDDSWKNTLSQLFLTKGWPTGSVYFNEYSDIASFSINPQLYCDYNIVVVKYSTELQLDISELANLILNEWLCNPMDITLYYYQQTDETNKWISTGTSCTVKVCPLNTQTLGIGCLTTDTETFEEVATLEKLVITDVVDGVNHKINLTTATCTIRNCKKLGPRENVAIIQVGRSSTIDITADPTTMPQTERMMRINWKKWWQVFYTIVDYVNQIIQVMSKRSRSLDAAEFYYRV</sequence>